<evidence type="ECO:0000255" key="1">
    <source>
        <dbReference type="HAMAP-Rule" id="MF_00135"/>
    </source>
</evidence>
<sequence length="208" mass="22775">MKVKICGITHPDDAREAAKAGADYIGMIFAKDSRRCVSEEKAKYIVEAIQEGNSEPVGVFPEHSVEEILAITETTGITSIQLSGEDILFKFSHLREHFSIFYVVSVYSNGQPSAALPPMNDAVTVVYDHIGGERGSPFDWKAFSPFQHNNWMLGGGVNLWNIKEGISLLNPRGIDVSSGVECPGILRKDIFLMQALINSAKELSSSTL</sequence>
<protein>
    <recommendedName>
        <fullName evidence="1">N-(5'-phosphoribosyl)anthranilate isomerase</fullName>
        <shortName evidence="1">PRAI</shortName>
        <ecNumber evidence="1">5.3.1.24</ecNumber>
    </recommendedName>
</protein>
<organism>
    <name type="scientific">Chlamydia trachomatis serovar A (strain ATCC VR-571B / DSM 19440 / HAR-13)</name>
    <dbReference type="NCBI Taxonomy" id="315277"/>
    <lineage>
        <taxon>Bacteria</taxon>
        <taxon>Pseudomonadati</taxon>
        <taxon>Chlamydiota</taxon>
        <taxon>Chlamydiia</taxon>
        <taxon>Chlamydiales</taxon>
        <taxon>Chlamydiaceae</taxon>
        <taxon>Chlamydia/Chlamydophila group</taxon>
        <taxon>Chlamydia</taxon>
    </lineage>
</organism>
<reference key="1">
    <citation type="journal article" date="2005" name="Infect. Immun.">
        <title>Comparative genomic analysis of Chlamydia trachomatis oculotropic and genitotropic strains.</title>
        <authorList>
            <person name="Carlson J.H."/>
            <person name="Porcella S.F."/>
            <person name="McClarty G."/>
            <person name="Caldwell H.D."/>
        </authorList>
    </citation>
    <scope>NUCLEOTIDE SEQUENCE [LARGE SCALE GENOMIC DNA]</scope>
    <source>
        <strain>ATCC VR-571B / DSM 19440 / HAR-13</strain>
    </source>
</reference>
<keyword id="KW-0028">Amino-acid biosynthesis</keyword>
<keyword id="KW-0057">Aromatic amino acid biosynthesis</keyword>
<keyword id="KW-0413">Isomerase</keyword>
<keyword id="KW-0822">Tryptophan biosynthesis</keyword>
<feature type="chain" id="PRO_1000018589" description="N-(5'-phosphoribosyl)anthranilate isomerase">
    <location>
        <begin position="1"/>
        <end position="208"/>
    </location>
</feature>
<name>TRPF_CHLTA</name>
<proteinExistence type="inferred from homology"/>
<comment type="catalytic activity">
    <reaction evidence="1">
        <text>N-(5-phospho-beta-D-ribosyl)anthranilate = 1-(2-carboxyphenylamino)-1-deoxy-D-ribulose 5-phosphate</text>
        <dbReference type="Rhea" id="RHEA:21540"/>
        <dbReference type="ChEBI" id="CHEBI:18277"/>
        <dbReference type="ChEBI" id="CHEBI:58613"/>
        <dbReference type="EC" id="5.3.1.24"/>
    </reaction>
</comment>
<comment type="pathway">
    <text evidence="1">Amino-acid biosynthesis; L-tryptophan biosynthesis; L-tryptophan from chorismate: step 3/5.</text>
</comment>
<comment type="similarity">
    <text evidence="1">Belongs to the TrpF family.</text>
</comment>
<gene>
    <name evidence="1" type="primary">trpF</name>
    <name type="ordered locus">CTA_0354</name>
</gene>
<accession>Q3KM33</accession>
<dbReference type="EC" id="5.3.1.24" evidence="1"/>
<dbReference type="EMBL" id="CP000051">
    <property type="protein sequence ID" value="AAX50589.1"/>
    <property type="molecule type" value="Genomic_DNA"/>
</dbReference>
<dbReference type="RefSeq" id="WP_011324682.1">
    <property type="nucleotide sequence ID" value="NC_007429.1"/>
</dbReference>
<dbReference type="SMR" id="Q3KM33"/>
<dbReference type="KEGG" id="cta:CTA_0354"/>
<dbReference type="HOGENOM" id="CLU_076364_1_0_0"/>
<dbReference type="UniPathway" id="UPA00035">
    <property type="reaction ID" value="UER00042"/>
</dbReference>
<dbReference type="Proteomes" id="UP000002532">
    <property type="component" value="Chromosome"/>
</dbReference>
<dbReference type="GO" id="GO:0004640">
    <property type="term" value="F:phosphoribosylanthranilate isomerase activity"/>
    <property type="evidence" value="ECO:0007669"/>
    <property type="project" value="UniProtKB-UniRule"/>
</dbReference>
<dbReference type="GO" id="GO:0000162">
    <property type="term" value="P:L-tryptophan biosynthetic process"/>
    <property type="evidence" value="ECO:0007669"/>
    <property type="project" value="UniProtKB-UniRule"/>
</dbReference>
<dbReference type="CDD" id="cd00405">
    <property type="entry name" value="PRAI"/>
    <property type="match status" value="1"/>
</dbReference>
<dbReference type="FunFam" id="3.20.20.70:FF:000361">
    <property type="entry name" value="N-(5'-phosphoribosyl)anthranilate isomerase"/>
    <property type="match status" value="1"/>
</dbReference>
<dbReference type="Gene3D" id="3.20.20.70">
    <property type="entry name" value="Aldolase class I"/>
    <property type="match status" value="1"/>
</dbReference>
<dbReference type="HAMAP" id="MF_00135">
    <property type="entry name" value="PRAI"/>
    <property type="match status" value="1"/>
</dbReference>
<dbReference type="InterPro" id="IPR013785">
    <property type="entry name" value="Aldolase_TIM"/>
</dbReference>
<dbReference type="InterPro" id="IPR001240">
    <property type="entry name" value="PRAI_dom"/>
</dbReference>
<dbReference type="InterPro" id="IPR011060">
    <property type="entry name" value="RibuloseP-bd_barrel"/>
</dbReference>
<dbReference type="InterPro" id="IPR044643">
    <property type="entry name" value="TrpF_fam"/>
</dbReference>
<dbReference type="NCBIfam" id="NF002303">
    <property type="entry name" value="PRK01222.2-3"/>
    <property type="match status" value="1"/>
</dbReference>
<dbReference type="PANTHER" id="PTHR42894">
    <property type="entry name" value="N-(5'-PHOSPHORIBOSYL)ANTHRANILATE ISOMERASE"/>
    <property type="match status" value="1"/>
</dbReference>
<dbReference type="PANTHER" id="PTHR42894:SF1">
    <property type="entry name" value="N-(5'-PHOSPHORIBOSYL)ANTHRANILATE ISOMERASE"/>
    <property type="match status" value="1"/>
</dbReference>
<dbReference type="Pfam" id="PF00697">
    <property type="entry name" value="PRAI"/>
    <property type="match status" value="1"/>
</dbReference>
<dbReference type="SUPFAM" id="SSF51366">
    <property type="entry name" value="Ribulose-phoshate binding barrel"/>
    <property type="match status" value="1"/>
</dbReference>